<proteinExistence type="inferred from homology"/>
<dbReference type="EC" id="1.2.1.27" evidence="1"/>
<dbReference type="EMBL" id="CP000001">
    <property type="protein sequence ID" value="AAU18006.1"/>
    <property type="molecule type" value="Genomic_DNA"/>
</dbReference>
<dbReference type="RefSeq" id="WP_000218115.1">
    <property type="nucleotide sequence ID" value="NC_006274.1"/>
</dbReference>
<dbReference type="SMR" id="Q63B74"/>
<dbReference type="KEGG" id="bcz:BCE33L2253"/>
<dbReference type="PATRIC" id="fig|288681.22.peg.3246"/>
<dbReference type="UniPathway" id="UPA00076">
    <property type="reaction ID" value="UER00148"/>
</dbReference>
<dbReference type="Proteomes" id="UP000002612">
    <property type="component" value="Chromosome"/>
</dbReference>
<dbReference type="GO" id="GO:0018478">
    <property type="term" value="F:malonate-semialdehyde dehydrogenase (acetylating) activity"/>
    <property type="evidence" value="ECO:0007669"/>
    <property type="project" value="UniProtKB-UniRule"/>
</dbReference>
<dbReference type="GO" id="GO:0004491">
    <property type="term" value="F:methylmalonate-semialdehyde dehydrogenase (acylating, NAD) activity"/>
    <property type="evidence" value="ECO:0007669"/>
    <property type="project" value="UniProtKB-UniRule"/>
</dbReference>
<dbReference type="GO" id="GO:0019310">
    <property type="term" value="P:inositol catabolic process"/>
    <property type="evidence" value="ECO:0007669"/>
    <property type="project" value="UniProtKB-UniRule"/>
</dbReference>
<dbReference type="GO" id="GO:0006210">
    <property type="term" value="P:thymine catabolic process"/>
    <property type="evidence" value="ECO:0007669"/>
    <property type="project" value="TreeGrafter"/>
</dbReference>
<dbReference type="GO" id="GO:0006574">
    <property type="term" value="P:valine catabolic process"/>
    <property type="evidence" value="ECO:0007669"/>
    <property type="project" value="TreeGrafter"/>
</dbReference>
<dbReference type="CDD" id="cd07085">
    <property type="entry name" value="ALDH_F6_MMSDH"/>
    <property type="match status" value="1"/>
</dbReference>
<dbReference type="FunFam" id="3.40.309.10:FF:000002">
    <property type="entry name" value="Methylmalonate-semialdehyde dehydrogenase (Acylating)"/>
    <property type="match status" value="1"/>
</dbReference>
<dbReference type="FunFam" id="3.40.605.10:FF:000003">
    <property type="entry name" value="Methylmalonate-semialdehyde dehydrogenase [acylating]"/>
    <property type="match status" value="1"/>
</dbReference>
<dbReference type="Gene3D" id="3.40.605.10">
    <property type="entry name" value="Aldehyde Dehydrogenase, Chain A, domain 1"/>
    <property type="match status" value="1"/>
</dbReference>
<dbReference type="Gene3D" id="3.40.309.10">
    <property type="entry name" value="Aldehyde Dehydrogenase, Chain A, domain 2"/>
    <property type="match status" value="1"/>
</dbReference>
<dbReference type="HAMAP" id="MF_01670">
    <property type="entry name" value="IolA"/>
    <property type="match status" value="1"/>
</dbReference>
<dbReference type="InterPro" id="IPR016161">
    <property type="entry name" value="Ald_DH/histidinol_DH"/>
</dbReference>
<dbReference type="InterPro" id="IPR016163">
    <property type="entry name" value="Ald_DH_C"/>
</dbReference>
<dbReference type="InterPro" id="IPR016160">
    <property type="entry name" value="Ald_DH_CS_CYS"/>
</dbReference>
<dbReference type="InterPro" id="IPR016162">
    <property type="entry name" value="Ald_DH_N"/>
</dbReference>
<dbReference type="InterPro" id="IPR015590">
    <property type="entry name" value="Aldehyde_DH_dom"/>
</dbReference>
<dbReference type="InterPro" id="IPR010061">
    <property type="entry name" value="MeMal-semiAld_DH"/>
</dbReference>
<dbReference type="InterPro" id="IPR023510">
    <property type="entry name" value="MSDH_GmP_bac"/>
</dbReference>
<dbReference type="NCBIfam" id="TIGR01722">
    <property type="entry name" value="MMSDH"/>
    <property type="match status" value="1"/>
</dbReference>
<dbReference type="PANTHER" id="PTHR43866">
    <property type="entry name" value="MALONATE-SEMIALDEHYDE DEHYDROGENASE"/>
    <property type="match status" value="1"/>
</dbReference>
<dbReference type="PANTHER" id="PTHR43866:SF4">
    <property type="entry name" value="MALONATE-SEMIALDEHYDE DEHYDROGENASE"/>
    <property type="match status" value="1"/>
</dbReference>
<dbReference type="Pfam" id="PF00171">
    <property type="entry name" value="Aldedh"/>
    <property type="match status" value="1"/>
</dbReference>
<dbReference type="SUPFAM" id="SSF53720">
    <property type="entry name" value="ALDH-like"/>
    <property type="match status" value="1"/>
</dbReference>
<dbReference type="PROSITE" id="PS00070">
    <property type="entry name" value="ALDEHYDE_DEHYDR_CYS"/>
    <property type="match status" value="1"/>
</dbReference>
<protein>
    <recommendedName>
        <fullName evidence="1">Malonate-semialdehyde dehydrogenase 2</fullName>
        <shortName evidence="1">MSA dehydrogenase 2</shortName>
        <ecNumber evidence="1">1.2.1.27</ecNumber>
    </recommendedName>
    <alternativeName>
        <fullName evidence="1">Methylmalonate-semialdehyde dehydrogenase 2</fullName>
        <shortName evidence="1">MMSA dehydrogenase 2</shortName>
        <shortName evidence="1">MSDH 2</shortName>
    </alternativeName>
</protein>
<evidence type="ECO:0000255" key="1">
    <source>
        <dbReference type="HAMAP-Rule" id="MF_01670"/>
    </source>
</evidence>
<name>IOLA2_BACCZ</name>
<sequence>MTVQTAPQIVKNYIGGEWVESISTKMEAVYNPATGEVIAQVPLSTKVDVEQAVSAANEAFKSWSKTAVPKRARILFKYQQLLVDNWEELAKLITIENGKSYNEAYGEVLRGIECVEFAAGAPTLMMGKQLPDIATGIESGMYRYPIGVIGGITPFNFPMMVPCWMFPLAIACGNTFVLKPSERTPLLAARLAELAEEAGLPKGVLNIVNGAHDVVNGLLEHKLVKAISFVGSQPVAEYVYKKGTENLKRVQALAGAKNHSIVLNDANLELATKQIISAAFGSAGERCMAASVVTVEEEIADQLVGRLVEEANKIVIGNGLDEDVFLGPVIRDNHKERTIGYIDSGVEQGATLVRDGREDTAVKGAGYFVGPTIFDHVTKEMKIWQDEIFAPVLSIVRVKSLDEAIEIANESRFANGACIYTDSGASVRQFRETIESGMLGVNVGVPAPMAFFPFSGWKDSFYGDLHANGTDGVEFYTRKKMLTSRWEK</sequence>
<keyword id="KW-0520">NAD</keyword>
<keyword id="KW-0560">Oxidoreductase</keyword>
<organism>
    <name type="scientific">Bacillus cereus (strain ZK / E33L)</name>
    <dbReference type="NCBI Taxonomy" id="288681"/>
    <lineage>
        <taxon>Bacteria</taxon>
        <taxon>Bacillati</taxon>
        <taxon>Bacillota</taxon>
        <taxon>Bacilli</taxon>
        <taxon>Bacillales</taxon>
        <taxon>Bacillaceae</taxon>
        <taxon>Bacillus</taxon>
        <taxon>Bacillus cereus group</taxon>
    </lineage>
</organism>
<comment type="function">
    <text evidence="1">Catalyzes the oxidation of malonate semialdehyde (MSA) and methylmalonate semialdehyde (MMSA) into acetyl-CoA and propanoyl-CoA, respectively. Is involved in a myo-inositol catabolic pathway. Bicarbonate, and not CO2, is the end-product of the enzymatic reaction.</text>
</comment>
<comment type="catalytic activity">
    <reaction evidence="1">
        <text>3-oxopropanoate + NAD(+) + CoA + H2O = hydrogencarbonate + acetyl-CoA + NADH + H(+)</text>
        <dbReference type="Rhea" id="RHEA:76615"/>
        <dbReference type="ChEBI" id="CHEBI:15377"/>
        <dbReference type="ChEBI" id="CHEBI:15378"/>
        <dbReference type="ChEBI" id="CHEBI:17544"/>
        <dbReference type="ChEBI" id="CHEBI:33190"/>
        <dbReference type="ChEBI" id="CHEBI:57287"/>
        <dbReference type="ChEBI" id="CHEBI:57288"/>
        <dbReference type="ChEBI" id="CHEBI:57540"/>
        <dbReference type="ChEBI" id="CHEBI:57945"/>
        <dbReference type="EC" id="1.2.1.27"/>
    </reaction>
    <physiologicalReaction direction="left-to-right" evidence="1">
        <dbReference type="Rhea" id="RHEA:76616"/>
    </physiologicalReaction>
</comment>
<comment type="catalytic activity">
    <reaction evidence="1">
        <text>2-methyl-3-oxopropanoate + NAD(+) + CoA + H2O = propanoyl-CoA + hydrogencarbonate + NADH + H(+)</text>
        <dbReference type="Rhea" id="RHEA:20804"/>
        <dbReference type="ChEBI" id="CHEBI:15377"/>
        <dbReference type="ChEBI" id="CHEBI:15378"/>
        <dbReference type="ChEBI" id="CHEBI:17544"/>
        <dbReference type="ChEBI" id="CHEBI:57287"/>
        <dbReference type="ChEBI" id="CHEBI:57392"/>
        <dbReference type="ChEBI" id="CHEBI:57540"/>
        <dbReference type="ChEBI" id="CHEBI:57700"/>
        <dbReference type="ChEBI" id="CHEBI:57945"/>
        <dbReference type="EC" id="1.2.1.27"/>
    </reaction>
    <physiologicalReaction direction="left-to-right" evidence="1">
        <dbReference type="Rhea" id="RHEA:20805"/>
    </physiologicalReaction>
</comment>
<comment type="pathway">
    <text evidence="1">Polyol metabolism; myo-inositol degradation into acetyl-CoA; acetyl-CoA from myo-inositol: step 7/7.</text>
</comment>
<comment type="subunit">
    <text evidence="1">Homotetramer.</text>
</comment>
<comment type="similarity">
    <text evidence="1">Belongs to the aldehyde dehydrogenase family. IolA subfamily.</text>
</comment>
<feature type="chain" id="PRO_0000352323" description="Malonate-semialdehyde dehydrogenase 2">
    <location>
        <begin position="1"/>
        <end position="488"/>
    </location>
</feature>
<feature type="active site" description="Nucleophile" evidence="1">
    <location>
        <position position="287"/>
    </location>
</feature>
<feature type="binding site" evidence="1">
    <location>
        <position position="155"/>
    </location>
    <ligand>
        <name>NAD(+)</name>
        <dbReference type="ChEBI" id="CHEBI:57540"/>
    </ligand>
</feature>
<feature type="binding site" evidence="1">
    <location>
        <position position="179"/>
    </location>
    <ligand>
        <name>NAD(+)</name>
        <dbReference type="ChEBI" id="CHEBI:57540"/>
    </ligand>
</feature>
<feature type="binding site" evidence="1">
    <location>
        <position position="182"/>
    </location>
    <ligand>
        <name>NAD(+)</name>
        <dbReference type="ChEBI" id="CHEBI:57540"/>
    </ligand>
</feature>
<feature type="binding site" evidence="1">
    <location>
        <position position="183"/>
    </location>
    <ligand>
        <name>NAD(+)</name>
        <dbReference type="ChEBI" id="CHEBI:57540"/>
    </ligand>
</feature>
<feature type="binding site" evidence="1">
    <location>
        <position position="232"/>
    </location>
    <ligand>
        <name>NAD(+)</name>
        <dbReference type="ChEBI" id="CHEBI:57540"/>
    </ligand>
</feature>
<feature type="binding site" evidence="1">
    <location>
        <position position="387"/>
    </location>
    <ligand>
        <name>NAD(+)</name>
        <dbReference type="ChEBI" id="CHEBI:57540"/>
    </ligand>
</feature>
<gene>
    <name evidence="1" type="primary">iolA2</name>
    <name type="ordered locus">BCE33L2253</name>
</gene>
<reference key="1">
    <citation type="journal article" date="2006" name="J. Bacteriol.">
        <title>Pathogenomic sequence analysis of Bacillus cereus and Bacillus thuringiensis isolates closely related to Bacillus anthracis.</title>
        <authorList>
            <person name="Han C.S."/>
            <person name="Xie G."/>
            <person name="Challacombe J.F."/>
            <person name="Altherr M.R."/>
            <person name="Bhotika S.S."/>
            <person name="Bruce D."/>
            <person name="Campbell C.S."/>
            <person name="Campbell M.L."/>
            <person name="Chen J."/>
            <person name="Chertkov O."/>
            <person name="Cleland C."/>
            <person name="Dimitrijevic M."/>
            <person name="Doggett N.A."/>
            <person name="Fawcett J.J."/>
            <person name="Glavina T."/>
            <person name="Goodwin L.A."/>
            <person name="Hill K.K."/>
            <person name="Hitchcock P."/>
            <person name="Jackson P.J."/>
            <person name="Keim P."/>
            <person name="Kewalramani A.R."/>
            <person name="Longmire J."/>
            <person name="Lucas S."/>
            <person name="Malfatti S."/>
            <person name="McMurry K."/>
            <person name="Meincke L.J."/>
            <person name="Misra M."/>
            <person name="Moseman B.L."/>
            <person name="Mundt M."/>
            <person name="Munk A.C."/>
            <person name="Okinaka R.T."/>
            <person name="Parson-Quintana B."/>
            <person name="Reilly L.P."/>
            <person name="Richardson P."/>
            <person name="Robinson D.L."/>
            <person name="Rubin E."/>
            <person name="Saunders E."/>
            <person name="Tapia R."/>
            <person name="Tesmer J.G."/>
            <person name="Thayer N."/>
            <person name="Thompson L.S."/>
            <person name="Tice H."/>
            <person name="Ticknor L.O."/>
            <person name="Wills P.L."/>
            <person name="Brettin T.S."/>
            <person name="Gilna P."/>
        </authorList>
    </citation>
    <scope>NUCLEOTIDE SEQUENCE [LARGE SCALE GENOMIC DNA]</scope>
    <source>
        <strain>ZK / E33L</strain>
    </source>
</reference>
<accession>Q63B74</accession>